<dbReference type="EMBL" id="CP000086">
    <property type="protein sequence ID" value="ABC37957.1"/>
    <property type="molecule type" value="Genomic_DNA"/>
</dbReference>
<dbReference type="RefSeq" id="WP_004192898.1">
    <property type="nucleotide sequence ID" value="NZ_CP008785.1"/>
</dbReference>
<dbReference type="SMR" id="Q2SWU6"/>
<dbReference type="GeneID" id="93060637"/>
<dbReference type="KEGG" id="bte:BTH_I2079"/>
<dbReference type="HOGENOM" id="CLU_095787_0_1_4"/>
<dbReference type="Proteomes" id="UP000001930">
    <property type="component" value="Chromosome I"/>
</dbReference>
<dbReference type="GO" id="GO:0005886">
    <property type="term" value="C:plasma membrane"/>
    <property type="evidence" value="ECO:0007669"/>
    <property type="project" value="UniProtKB-SubCell"/>
</dbReference>
<dbReference type="GO" id="GO:0008381">
    <property type="term" value="F:mechanosensitive monoatomic ion channel activity"/>
    <property type="evidence" value="ECO:0007669"/>
    <property type="project" value="UniProtKB-UniRule"/>
</dbReference>
<dbReference type="Gene3D" id="1.10.1200.120">
    <property type="entry name" value="Large-conductance mechanosensitive channel, MscL, domain 1"/>
    <property type="match status" value="1"/>
</dbReference>
<dbReference type="HAMAP" id="MF_00115">
    <property type="entry name" value="MscL"/>
    <property type="match status" value="1"/>
</dbReference>
<dbReference type="InterPro" id="IPR019823">
    <property type="entry name" value="Mechanosensitive_channel_CS"/>
</dbReference>
<dbReference type="InterPro" id="IPR001185">
    <property type="entry name" value="MS_channel"/>
</dbReference>
<dbReference type="InterPro" id="IPR037673">
    <property type="entry name" value="MSC/AndL"/>
</dbReference>
<dbReference type="InterPro" id="IPR036019">
    <property type="entry name" value="MscL_channel"/>
</dbReference>
<dbReference type="NCBIfam" id="TIGR00220">
    <property type="entry name" value="mscL"/>
    <property type="match status" value="1"/>
</dbReference>
<dbReference type="NCBIfam" id="NF001843">
    <property type="entry name" value="PRK00567.1-4"/>
    <property type="match status" value="1"/>
</dbReference>
<dbReference type="NCBIfam" id="NF010557">
    <property type="entry name" value="PRK13952.1"/>
    <property type="match status" value="1"/>
</dbReference>
<dbReference type="PANTHER" id="PTHR30266:SF2">
    <property type="entry name" value="LARGE-CONDUCTANCE MECHANOSENSITIVE CHANNEL"/>
    <property type="match status" value="1"/>
</dbReference>
<dbReference type="PANTHER" id="PTHR30266">
    <property type="entry name" value="MECHANOSENSITIVE CHANNEL MSCL"/>
    <property type="match status" value="1"/>
</dbReference>
<dbReference type="Pfam" id="PF01741">
    <property type="entry name" value="MscL"/>
    <property type="match status" value="1"/>
</dbReference>
<dbReference type="PRINTS" id="PR01264">
    <property type="entry name" value="MECHCHANNEL"/>
</dbReference>
<dbReference type="SUPFAM" id="SSF81330">
    <property type="entry name" value="Gated mechanosensitive channel"/>
    <property type="match status" value="1"/>
</dbReference>
<dbReference type="PROSITE" id="PS01327">
    <property type="entry name" value="MSCL"/>
    <property type="match status" value="1"/>
</dbReference>
<feature type="chain" id="PRO_0000237990" description="Large-conductance mechanosensitive channel">
    <location>
        <begin position="1"/>
        <end position="143"/>
    </location>
</feature>
<feature type="transmembrane region" description="Helical" evidence="1">
    <location>
        <begin position="10"/>
        <end position="30"/>
    </location>
</feature>
<feature type="transmembrane region" description="Helical" evidence="1">
    <location>
        <begin position="89"/>
        <end position="109"/>
    </location>
</feature>
<protein>
    <recommendedName>
        <fullName evidence="1">Large-conductance mechanosensitive channel</fullName>
    </recommendedName>
</protein>
<gene>
    <name evidence="1" type="primary">mscL</name>
    <name type="ordered locus">BTH_I2079</name>
</gene>
<name>MSCL_BURTA</name>
<evidence type="ECO:0000255" key="1">
    <source>
        <dbReference type="HAMAP-Rule" id="MF_00115"/>
    </source>
</evidence>
<organism>
    <name type="scientific">Burkholderia thailandensis (strain ATCC 700388 / DSM 13276 / CCUG 48851 / CIP 106301 / E264)</name>
    <dbReference type="NCBI Taxonomy" id="271848"/>
    <lineage>
        <taxon>Bacteria</taxon>
        <taxon>Pseudomonadati</taxon>
        <taxon>Pseudomonadota</taxon>
        <taxon>Betaproteobacteria</taxon>
        <taxon>Burkholderiales</taxon>
        <taxon>Burkholderiaceae</taxon>
        <taxon>Burkholderia</taxon>
        <taxon>pseudomallei group</taxon>
    </lineage>
</organism>
<reference key="1">
    <citation type="journal article" date="2005" name="BMC Genomics">
        <title>Bacterial genome adaptation to niches: divergence of the potential virulence genes in three Burkholderia species of different survival strategies.</title>
        <authorList>
            <person name="Kim H.S."/>
            <person name="Schell M.A."/>
            <person name="Yu Y."/>
            <person name="Ulrich R.L."/>
            <person name="Sarria S.H."/>
            <person name="Nierman W.C."/>
            <person name="DeShazer D."/>
        </authorList>
    </citation>
    <scope>NUCLEOTIDE SEQUENCE [LARGE SCALE GENOMIC DNA]</scope>
    <source>
        <strain>ATCC 700388 / DSM 13276 / CCUG 48851 / CIP 106301 / E264</strain>
    </source>
</reference>
<keyword id="KW-0997">Cell inner membrane</keyword>
<keyword id="KW-1003">Cell membrane</keyword>
<keyword id="KW-0407">Ion channel</keyword>
<keyword id="KW-0406">Ion transport</keyword>
<keyword id="KW-0472">Membrane</keyword>
<keyword id="KW-0812">Transmembrane</keyword>
<keyword id="KW-1133">Transmembrane helix</keyword>
<keyword id="KW-0813">Transport</keyword>
<accession>Q2SWU6</accession>
<proteinExistence type="inferred from homology"/>
<comment type="function">
    <text evidence="1">Channel that opens in response to stretch forces in the membrane lipid bilayer. May participate in the regulation of osmotic pressure changes within the cell.</text>
</comment>
<comment type="subunit">
    <text evidence="1">Homopentamer.</text>
</comment>
<comment type="subcellular location">
    <subcellularLocation>
        <location evidence="1">Cell inner membrane</location>
        <topology evidence="1">Multi-pass membrane protein</topology>
    </subcellularLocation>
</comment>
<comment type="similarity">
    <text evidence="1">Belongs to the MscL family.</text>
</comment>
<sequence>MSIIKEFKEFAVKGNVMDLAIGVIIGGAFSKIVDSVVKDLIMPVIGVLTGGLDFSNKFVLLGQIPASFKGNPESFKDLQAAGVATFGYGSFITVLINFIILAFIIFLMVKFINKLRKPEEAAPAATPEDVLLLREIRDSLKQR</sequence>